<sequence>MATLATKKATLVAALKDLQRVTVAFSGGIDSTLVLKMALDVLGRDNVTAVVANSELFTDEEFDKAMSLAEELGANVQGTTLDYLSDDHIKNNTPDSWYYAKKMFYSRLNDIAANNGSAAVLDGMIKNDENDYRPGLKARSEAGARSLLQEADFFKTDVRALAQELGLTNWNKVASCSVSSRFPYGTTLTHDNIAQVMAAEKYLRSLGFPTVRVRFHNDIARIELPEARIGDFLVFNDRVNRQLQSLGFRYVTLDLGGFRSGRMNDTLTKAQLATFA</sequence>
<comment type="function">
    <text evidence="2 3">Involved in the biosynthesis of a nickel-pincer cofactor ((SCS)Ni(II) pincer complex). Catalyzes the ATP-dependent incorporation of two sulfur atoms in pyridinium-3,5-biscarboxylic acid mononucleotide (P2CMN) to yield pyridinium-3,5-bisthiocarboxylic acid mononucleotide (P2TMN). The source of sulfur is the enzyme itself: Cys-176 of LarE is the sulfur donor, thereby being converted into dehydroalanine, and is not regenerated in vivo. Thus, two molecules of LarE undergo sacrificial sulfur transfer to create one P2TMN (PubMed:27114550). Binds nickel (PubMed:24710389). Is required for the activation of the lactate racemase LarA (PubMed:24710389). May also be involved in the activation of other nickel-pincer cofactor-dependent enzymes (PubMed:27114550).</text>
</comment>
<comment type="catalytic activity">
    <reaction evidence="3">
        <text>pyridinium-3,5-dicarboxylate mononucleotide + [LarE protein]-L-cysteine + ATP = [LarE protein]-dehydroalanine + pyridinium-3-carboxylate-5-thiocarboxylate mononucleotide + AMP + diphosphate + H(+)</text>
        <dbReference type="Rhea" id="RHEA:54788"/>
        <dbReference type="Rhea" id="RHEA-COMP:13982"/>
        <dbReference type="Rhea" id="RHEA-COMP:13985"/>
        <dbReference type="ChEBI" id="CHEBI:15378"/>
        <dbReference type="ChEBI" id="CHEBI:29950"/>
        <dbReference type="ChEBI" id="CHEBI:30616"/>
        <dbReference type="ChEBI" id="CHEBI:33019"/>
        <dbReference type="ChEBI" id="CHEBI:90873"/>
        <dbReference type="ChEBI" id="CHEBI:137353"/>
        <dbReference type="ChEBI" id="CHEBI:138330"/>
        <dbReference type="ChEBI" id="CHEBI:456215"/>
        <dbReference type="EC" id="4.4.1.37"/>
    </reaction>
</comment>
<comment type="catalytic activity">
    <reaction evidence="3">
        <text>[LarE protein]-L-cysteine + pyridinium-3-carboxylate-5-thiocarboxylate mononucleotide + ATP = pyridinium-3,5-bisthiocarboxylate mononucleotide + [LarE protein]-dehydroalanine + AMP + diphosphate + H(+)</text>
        <dbReference type="Rhea" id="RHEA:54892"/>
        <dbReference type="Rhea" id="RHEA-COMP:13982"/>
        <dbReference type="Rhea" id="RHEA-COMP:13985"/>
        <dbReference type="ChEBI" id="CHEBI:15378"/>
        <dbReference type="ChEBI" id="CHEBI:29950"/>
        <dbReference type="ChEBI" id="CHEBI:30616"/>
        <dbReference type="ChEBI" id="CHEBI:33019"/>
        <dbReference type="ChEBI" id="CHEBI:90873"/>
        <dbReference type="ChEBI" id="CHEBI:137372"/>
        <dbReference type="ChEBI" id="CHEBI:138330"/>
        <dbReference type="ChEBI" id="CHEBI:456215"/>
        <dbReference type="EC" id="4.4.1.37"/>
    </reaction>
</comment>
<comment type="induction">
    <text evidence="1 2">Induced by L-lactate and repressed by D-lactate. Is thus regulated by the L-lactate/D-lactate ratio. Makes part of the lar operon (larABCDE).</text>
</comment>
<comment type="disruption phenotype">
    <text evidence="2">Deletion of this gene leads to a loss of lactate racemase activity.</text>
</comment>
<comment type="similarity">
    <text evidence="6">Belongs to the LarE family.</text>
</comment>
<feature type="chain" id="PRO_0000441655" description="Pyridinium-3,5-bisthiocarboxylic acid mononucleotide synthase">
    <location>
        <begin position="1"/>
        <end position="276"/>
    </location>
</feature>
<feature type="active site" description="Nucleophile and sulfur donor" evidence="3">
    <location>
        <position position="176"/>
    </location>
</feature>
<feature type="modified residue" description="2,3-didehydroalanine (Cys)" evidence="3">
    <location>
        <position position="176"/>
    </location>
</feature>
<feature type="mutagenesis site" description="Loss of activity." evidence="3">
    <original>D</original>
    <variation>A</variation>
    <location>
        <position position="30"/>
    </location>
</feature>
<feature type="mutagenesis site" description="Loss of activity." evidence="3">
    <original>C</original>
    <variation>A</variation>
    <location>
        <position position="176"/>
    </location>
</feature>
<feature type="helix" evidence="12">
    <location>
        <begin position="4"/>
        <end position="18"/>
    </location>
</feature>
<feature type="strand" evidence="12">
    <location>
        <begin position="20"/>
        <end position="24"/>
    </location>
</feature>
<feature type="helix" evidence="12">
    <location>
        <begin position="29"/>
        <end position="42"/>
    </location>
</feature>
<feature type="helix" evidence="12">
    <location>
        <begin position="44"/>
        <end position="46"/>
    </location>
</feature>
<feature type="strand" evidence="12">
    <location>
        <begin position="47"/>
        <end position="53"/>
    </location>
</feature>
<feature type="helix" evidence="12">
    <location>
        <begin position="59"/>
        <end position="72"/>
    </location>
</feature>
<feature type="strand" evidence="12">
    <location>
        <begin position="76"/>
        <end position="80"/>
    </location>
</feature>
<feature type="helix" evidence="12">
    <location>
        <begin position="83"/>
        <end position="85"/>
    </location>
</feature>
<feature type="helix" evidence="12">
    <location>
        <begin position="87"/>
        <end position="90"/>
    </location>
</feature>
<feature type="helix" evidence="12">
    <location>
        <begin position="96"/>
        <end position="115"/>
    </location>
</feature>
<feature type="strand" evidence="12">
    <location>
        <begin position="118"/>
        <end position="121"/>
    </location>
</feature>
<feature type="helix" evidence="9">
    <location>
        <begin position="126"/>
        <end position="128"/>
    </location>
</feature>
<feature type="strand" evidence="11">
    <location>
        <begin position="131"/>
        <end position="133"/>
    </location>
</feature>
<feature type="strand" evidence="10">
    <location>
        <begin position="134"/>
        <end position="136"/>
    </location>
</feature>
<feature type="helix" evidence="12">
    <location>
        <begin position="138"/>
        <end position="142"/>
    </location>
</feature>
<feature type="helix" evidence="12">
    <location>
        <begin position="147"/>
        <end position="150"/>
    </location>
</feature>
<feature type="helix" evidence="12">
    <location>
        <begin position="155"/>
        <end position="165"/>
    </location>
</feature>
<feature type="helix" evidence="12">
    <location>
        <begin position="178"/>
        <end position="181"/>
    </location>
</feature>
<feature type="helix" evidence="12">
    <location>
        <begin position="190"/>
        <end position="205"/>
    </location>
</feature>
<feature type="strand" evidence="12">
    <location>
        <begin position="212"/>
        <end position="216"/>
    </location>
</feature>
<feature type="strand" evidence="12">
    <location>
        <begin position="219"/>
        <end position="223"/>
    </location>
</feature>
<feature type="helix" evidence="12">
    <location>
        <begin position="226"/>
        <end position="228"/>
    </location>
</feature>
<feature type="helix" evidence="12">
    <location>
        <begin position="229"/>
        <end position="232"/>
    </location>
</feature>
<feature type="helix" evidence="12">
    <location>
        <begin position="233"/>
        <end position="235"/>
    </location>
</feature>
<feature type="helix" evidence="12">
    <location>
        <begin position="236"/>
        <end position="245"/>
    </location>
</feature>
<feature type="strand" evidence="12">
    <location>
        <begin position="249"/>
        <end position="254"/>
    </location>
</feature>
<feature type="turn" evidence="12">
    <location>
        <begin position="258"/>
        <end position="263"/>
    </location>
</feature>
<feature type="helix" evidence="12">
    <location>
        <begin position="266"/>
        <end position="276"/>
    </location>
</feature>
<organism>
    <name type="scientific">Lactiplantibacillus plantarum (strain ATCC BAA-793 / NCIMB 8826 / WCFS1)</name>
    <name type="common">Lactobacillus plantarum</name>
    <dbReference type="NCBI Taxonomy" id="220668"/>
    <lineage>
        <taxon>Bacteria</taxon>
        <taxon>Bacillati</taxon>
        <taxon>Bacillota</taxon>
        <taxon>Bacilli</taxon>
        <taxon>Lactobacillales</taxon>
        <taxon>Lactobacillaceae</taxon>
        <taxon>Lactiplantibacillus</taxon>
    </lineage>
</organism>
<name>LARE_LACPL</name>
<dbReference type="EC" id="4.4.1.37" evidence="3"/>
<dbReference type="EMBL" id="AL935263">
    <property type="protein sequence ID" value="CCC77665.1"/>
    <property type="molecule type" value="Genomic_DNA"/>
</dbReference>
<dbReference type="RefSeq" id="WP_003641716.1">
    <property type="nucleotide sequence ID" value="NC_004567.2"/>
</dbReference>
<dbReference type="RefSeq" id="YP_004888179.1">
    <property type="nucleotide sequence ID" value="NC_004567.2"/>
</dbReference>
<dbReference type="PDB" id="5UDQ">
    <property type="method" value="X-ray"/>
    <property type="resolution" value="2.09 A"/>
    <property type="chains" value="A/B/C/D/E/F=1-276"/>
</dbReference>
<dbReference type="PDB" id="5UDR">
    <property type="method" value="X-ray"/>
    <property type="resolution" value="2.62 A"/>
    <property type="chains" value="A/B/C/D/E/F=1-276"/>
</dbReference>
<dbReference type="PDB" id="5UDS">
    <property type="method" value="X-ray"/>
    <property type="resolution" value="2.37 A"/>
    <property type="chains" value="A/B/C/D/E/F=1-276"/>
</dbReference>
<dbReference type="PDB" id="5UDT">
    <property type="method" value="X-ray"/>
    <property type="resolution" value="3.19 A"/>
    <property type="chains" value="A/B/C/D/E/F=1-276"/>
</dbReference>
<dbReference type="PDB" id="5UDU">
    <property type="method" value="X-ray"/>
    <property type="resolution" value="2.79 A"/>
    <property type="chains" value="A/B/C/D/E/F=1-276"/>
</dbReference>
<dbReference type="PDB" id="5UDV">
    <property type="method" value="X-ray"/>
    <property type="resolution" value="2.62 A"/>
    <property type="chains" value="A/B/C/D/E/F=1-276"/>
</dbReference>
<dbReference type="PDB" id="5UDW">
    <property type="method" value="X-ray"/>
    <property type="resolution" value="2.70 A"/>
    <property type="chains" value="A/B/C/D/E/F=1-276"/>
</dbReference>
<dbReference type="PDB" id="5UDX">
    <property type="method" value="X-ray"/>
    <property type="resolution" value="2.78 A"/>
    <property type="chains" value="A/B/C/D/E/F=1-276"/>
</dbReference>
<dbReference type="PDB" id="5UNM">
    <property type="method" value="X-ray"/>
    <property type="resolution" value="2.58 A"/>
    <property type="chains" value="A/B/C/D/E/F=1-276"/>
</dbReference>
<dbReference type="PDB" id="6B2M">
    <property type="method" value="X-ray"/>
    <property type="resolution" value="2.09 A"/>
    <property type="chains" value="A/B/C/D/E/F=1-276"/>
</dbReference>
<dbReference type="PDB" id="6B2O">
    <property type="method" value="X-ray"/>
    <property type="resolution" value="2.35 A"/>
    <property type="chains" value="A/B/C/D/E/F=1-276"/>
</dbReference>
<dbReference type="PDB" id="6DG3">
    <property type="method" value="X-ray"/>
    <property type="resolution" value="2.94 A"/>
    <property type="chains" value="A/B/C/D/E/F/G/H/I/J/K/L=1-276"/>
</dbReference>
<dbReference type="PDB" id="6UTP">
    <property type="method" value="X-ray"/>
    <property type="resolution" value="3.55 A"/>
    <property type="chains" value="A/B/C/D/E/F=1-276"/>
</dbReference>
<dbReference type="PDB" id="6UTQ">
    <property type="method" value="X-ray"/>
    <property type="resolution" value="2.39 A"/>
    <property type="chains" value="A/B/C/D/E/F=1-276"/>
</dbReference>
<dbReference type="PDB" id="6UTR">
    <property type="method" value="X-ray"/>
    <property type="resolution" value="2.41 A"/>
    <property type="chains" value="A/B/C/D/E/F=1-276"/>
</dbReference>
<dbReference type="PDB" id="6UTT">
    <property type="method" value="X-ray"/>
    <property type="resolution" value="2.49 A"/>
    <property type="chains" value="A/B/C/D/E/F=1-276"/>
</dbReference>
<dbReference type="PDBsum" id="5UDQ"/>
<dbReference type="PDBsum" id="5UDR"/>
<dbReference type="PDBsum" id="5UDS"/>
<dbReference type="PDBsum" id="5UDT"/>
<dbReference type="PDBsum" id="5UDU"/>
<dbReference type="PDBsum" id="5UDV"/>
<dbReference type="PDBsum" id="5UDW"/>
<dbReference type="PDBsum" id="5UDX"/>
<dbReference type="PDBsum" id="5UNM"/>
<dbReference type="PDBsum" id="6B2M"/>
<dbReference type="PDBsum" id="6B2O"/>
<dbReference type="PDBsum" id="6DG3"/>
<dbReference type="PDBsum" id="6UTP"/>
<dbReference type="PDBsum" id="6UTQ"/>
<dbReference type="PDBsum" id="6UTR"/>
<dbReference type="PDBsum" id="6UTT"/>
<dbReference type="SMR" id="F9UST4"/>
<dbReference type="STRING" id="220668.lp_0109"/>
<dbReference type="DNASU" id="1061362"/>
<dbReference type="EnsemblBacteria" id="CCC77665">
    <property type="protein sequence ID" value="CCC77665"/>
    <property type="gene ID" value="lp_0109"/>
</dbReference>
<dbReference type="GeneID" id="89667859"/>
<dbReference type="KEGG" id="lpl:lp_0109"/>
<dbReference type="PATRIC" id="fig|220668.9.peg.89"/>
<dbReference type="eggNOG" id="COG1606">
    <property type="taxonomic scope" value="Bacteria"/>
</dbReference>
<dbReference type="HOGENOM" id="CLU_061181_2_0_9"/>
<dbReference type="OrthoDB" id="9776919at2"/>
<dbReference type="PhylomeDB" id="F9UST4"/>
<dbReference type="BioCyc" id="MetaCyc:MONOMER-20306"/>
<dbReference type="BRENDA" id="4.4.1.37">
    <property type="organism ID" value="2849"/>
</dbReference>
<dbReference type="Proteomes" id="UP000000432">
    <property type="component" value="Chromosome"/>
</dbReference>
<dbReference type="GO" id="GO:0005524">
    <property type="term" value="F:ATP binding"/>
    <property type="evidence" value="ECO:0007669"/>
    <property type="project" value="UniProtKB-KW"/>
</dbReference>
<dbReference type="GO" id="GO:0016829">
    <property type="term" value="F:lyase activity"/>
    <property type="evidence" value="ECO:0007669"/>
    <property type="project" value="UniProtKB-KW"/>
</dbReference>
<dbReference type="GO" id="GO:0016783">
    <property type="term" value="F:sulfurtransferase activity"/>
    <property type="evidence" value="ECO:0007669"/>
    <property type="project" value="InterPro"/>
</dbReference>
<dbReference type="CDD" id="cd01990">
    <property type="entry name" value="LarE-like"/>
    <property type="match status" value="1"/>
</dbReference>
<dbReference type="DisProt" id="DP01168"/>
<dbReference type="Gene3D" id="3.40.50.620">
    <property type="entry name" value="HUPs"/>
    <property type="match status" value="1"/>
</dbReference>
<dbReference type="InterPro" id="IPR005232">
    <property type="entry name" value="LarE"/>
</dbReference>
<dbReference type="InterPro" id="IPR022310">
    <property type="entry name" value="NAD/GMP_synthase"/>
</dbReference>
<dbReference type="InterPro" id="IPR052188">
    <property type="entry name" value="Ni-pincer_cofactor_biosynth"/>
</dbReference>
<dbReference type="InterPro" id="IPR014729">
    <property type="entry name" value="Rossmann-like_a/b/a_fold"/>
</dbReference>
<dbReference type="NCBIfam" id="TIGR00268">
    <property type="entry name" value="ATP-dependent sacrificial sulfur transferase LarE"/>
    <property type="match status" value="1"/>
</dbReference>
<dbReference type="PANTHER" id="PTHR43169">
    <property type="entry name" value="EXSB FAMILY PROTEIN"/>
    <property type="match status" value="1"/>
</dbReference>
<dbReference type="PANTHER" id="PTHR43169:SF2">
    <property type="entry name" value="NAD_GMP SYNTHASE DOMAIN-CONTAINING PROTEIN"/>
    <property type="match status" value="1"/>
</dbReference>
<dbReference type="Pfam" id="PF02540">
    <property type="entry name" value="NAD_synthase"/>
    <property type="match status" value="1"/>
</dbReference>
<dbReference type="PIRSF" id="PIRSF006661">
    <property type="entry name" value="PP-lp_UCP006661"/>
    <property type="match status" value="1"/>
</dbReference>
<dbReference type="SUPFAM" id="SSF52402">
    <property type="entry name" value="Adenine nucleotide alpha hydrolases-like"/>
    <property type="match status" value="1"/>
</dbReference>
<protein>
    <recommendedName>
        <fullName evidence="6">Pyridinium-3,5-bisthiocarboxylic acid mononucleotide synthase</fullName>
        <ecNumber evidence="3">4.4.1.37</ecNumber>
    </recommendedName>
    <alternativeName>
        <fullName evidence="5">Lactate racemase accessory protein LarE</fullName>
    </alternativeName>
    <alternativeName>
        <fullName evidence="5">Lactate racemase activation protein LarE</fullName>
    </alternativeName>
    <alternativeName>
        <fullName evidence="5">Lactate racemase maturation protein LarE</fullName>
    </alternativeName>
    <alternativeName>
        <fullName evidence="4 8">Lactate racemization operon protein LarE</fullName>
    </alternativeName>
    <alternativeName>
        <fullName evidence="7">Nickel-pincer cofactor biosynthesis protein LarE</fullName>
    </alternativeName>
    <alternativeName>
        <fullName evidence="7">Pyridinium-3,5-biscarboxylic acid mononucleotide sulfurtransferase</fullName>
        <shortName evidence="7">P2CMN sulfurtransferase</shortName>
    </alternativeName>
</protein>
<keyword id="KW-0002">3D-structure</keyword>
<keyword id="KW-0067">ATP-binding</keyword>
<keyword id="KW-0456">Lyase</keyword>
<keyword id="KW-0533">Nickel</keyword>
<keyword id="KW-0547">Nucleotide-binding</keyword>
<keyword id="KW-1185">Reference proteome</keyword>
<evidence type="ECO:0000269" key="1">
    <source>
    </source>
</evidence>
<evidence type="ECO:0000269" key="2">
    <source>
    </source>
</evidence>
<evidence type="ECO:0000269" key="3">
    <source>
    </source>
</evidence>
<evidence type="ECO:0000303" key="4">
    <source>
    </source>
</evidence>
<evidence type="ECO:0000303" key="5">
    <source>
    </source>
</evidence>
<evidence type="ECO:0000305" key="6"/>
<evidence type="ECO:0000305" key="7">
    <source>
    </source>
</evidence>
<evidence type="ECO:0000312" key="8">
    <source>
        <dbReference type="EMBL" id="CCC77665.1"/>
    </source>
</evidence>
<evidence type="ECO:0007829" key="9">
    <source>
        <dbReference type="PDB" id="5UDT"/>
    </source>
</evidence>
<evidence type="ECO:0007829" key="10">
    <source>
        <dbReference type="PDB" id="5UDW"/>
    </source>
</evidence>
<evidence type="ECO:0007829" key="11">
    <source>
        <dbReference type="PDB" id="5UNM"/>
    </source>
</evidence>
<evidence type="ECO:0007829" key="12">
    <source>
        <dbReference type="PDB" id="6B2M"/>
    </source>
</evidence>
<accession>F9UST4</accession>
<reference key="1">
    <citation type="journal article" date="2003" name="Proc. Natl. Acad. Sci. U.S.A.">
        <title>Complete genome sequence of Lactobacillus plantarum WCFS1.</title>
        <authorList>
            <person name="Kleerebezem M."/>
            <person name="Boekhorst J."/>
            <person name="van Kranenburg R."/>
            <person name="Molenaar D."/>
            <person name="Kuipers O.P."/>
            <person name="Leer R."/>
            <person name="Tarchini R."/>
            <person name="Peters S.A."/>
            <person name="Sandbrink H.M."/>
            <person name="Fiers M.W.E.J."/>
            <person name="Stiekema W."/>
            <person name="Klein Lankhorst R.M."/>
            <person name="Bron P.A."/>
            <person name="Hoffer S.M."/>
            <person name="Nierop Groot M.N."/>
            <person name="Kerkhoven R."/>
            <person name="De Vries M."/>
            <person name="Ursing B."/>
            <person name="De Vos W.M."/>
            <person name="Siezen R.J."/>
        </authorList>
    </citation>
    <scope>NUCLEOTIDE SEQUENCE [LARGE SCALE GENOMIC DNA]</scope>
    <source>
        <strain>ATCC BAA-793 / NCIMB 8826 / WCFS1</strain>
    </source>
</reference>
<reference key="2">
    <citation type="journal article" date="2012" name="J. Bacteriol.">
        <title>Complete resequencing and reannotation of the Lactobacillus plantarum WCFS1 genome.</title>
        <authorList>
            <person name="Siezen R.J."/>
            <person name="Francke C."/>
            <person name="Renckens B."/>
            <person name="Boekhorst J."/>
            <person name="Wels M."/>
            <person name="Kleerebezem M."/>
            <person name="van Hijum S.A."/>
        </authorList>
    </citation>
    <scope>NUCLEOTIDE SEQUENCE [LARGE SCALE GENOMIC DNA]</scope>
    <scope>GENOME REANNOTATION</scope>
    <source>
        <strain>ATCC BAA-793 / NCIMB 8826 / WCFS1</strain>
    </source>
</reference>
<reference key="3">
    <citation type="journal article" date="2005" name="J. Bacteriol.">
        <title>Lactate racemization as a rescue pathway for supplying D-lactate to the cell wall biosynthesis machinery in Lactobacillus plantarum.</title>
        <authorList>
            <person name="Goffin P."/>
            <person name="Deghorain M."/>
            <person name="Mainardi J.L."/>
            <person name="Tytgat I."/>
            <person name="Champomier-Verges M.C."/>
            <person name="Kleerebezem M."/>
            <person name="Hols P."/>
        </authorList>
    </citation>
    <scope>INDUCTION</scope>
    <source>
        <strain>ATCC BAA-793 / NCIMB 8826 / WCFS1</strain>
    </source>
</reference>
<reference key="4">
    <citation type="journal article" date="2014" name="Nat. Commun.">
        <title>Lactate racemase is a nickel-dependent enzyme activated by a widespread maturation system.</title>
        <authorList>
            <person name="Desguin B."/>
            <person name="Goffin P."/>
            <person name="Viaene E."/>
            <person name="Kleerebezem M."/>
            <person name="Martin-Diaconescu V."/>
            <person name="Maroney M.J."/>
            <person name="Declercq J.P."/>
            <person name="Soumillion P."/>
            <person name="Hols P."/>
        </authorList>
    </citation>
    <scope>FUNCTION</scope>
    <scope>INDUCTION</scope>
    <scope>DISRUPTION PHENOTYPE</scope>
    <source>
        <strain>ATCC BAA-793 / NCIMB 8826 / WCFS1</strain>
    </source>
</reference>
<reference key="5">
    <citation type="journal article" date="2016" name="Proc. Natl. Acad. Sci. U.S.A.">
        <title>Nickel-pincer cofactor biosynthesis involves LarB-catalyzed pyridinium carboxylation and LarE-dependent sacrificial sulfur insertion.</title>
        <authorList>
            <person name="Desguin B."/>
            <person name="Soumillion P."/>
            <person name="Hols P."/>
            <person name="Hausinger R.P."/>
        </authorList>
    </citation>
    <scope>FUNCTION</scope>
    <scope>CATALYTIC ACTIVITY</scope>
    <scope>REACTION MECHANISM</scope>
    <scope>ACTIVE SITE</scope>
    <scope>MUTAGENESIS OF ASP-30 AND CYS-176</scope>
    <scope>DIDEHYDROALANINE FORMATION AT CYS-176</scope>
</reference>
<proteinExistence type="evidence at protein level"/>
<gene>
    <name evidence="4 8" type="primary">larE</name>
    <name evidence="8" type="ordered locus">lp_0109</name>
</gene>